<dbReference type="EC" id="1.1.1.23" evidence="1"/>
<dbReference type="EMBL" id="AE009439">
    <property type="protein sequence ID" value="AAM01925.1"/>
    <property type="molecule type" value="Genomic_DNA"/>
</dbReference>
<dbReference type="RefSeq" id="WP_011019080.1">
    <property type="nucleotide sequence ID" value="NC_003551.1"/>
</dbReference>
<dbReference type="SMR" id="Q8TXG3"/>
<dbReference type="FunCoup" id="Q8TXG3">
    <property type="interactions" value="190"/>
</dbReference>
<dbReference type="STRING" id="190192.MK0711"/>
<dbReference type="PaxDb" id="190192-MK0711"/>
<dbReference type="EnsemblBacteria" id="AAM01925">
    <property type="protein sequence ID" value="AAM01925"/>
    <property type="gene ID" value="MK0711"/>
</dbReference>
<dbReference type="GeneID" id="1476812"/>
<dbReference type="KEGG" id="mka:MK0711"/>
<dbReference type="PATRIC" id="fig|190192.8.peg.752"/>
<dbReference type="HOGENOM" id="CLU_006732_3_3_2"/>
<dbReference type="InParanoid" id="Q8TXG3"/>
<dbReference type="OrthoDB" id="36308at2157"/>
<dbReference type="UniPathway" id="UPA00031">
    <property type="reaction ID" value="UER00014"/>
</dbReference>
<dbReference type="Proteomes" id="UP000001826">
    <property type="component" value="Chromosome"/>
</dbReference>
<dbReference type="GO" id="GO:0005737">
    <property type="term" value="C:cytoplasm"/>
    <property type="evidence" value="ECO:0007669"/>
    <property type="project" value="TreeGrafter"/>
</dbReference>
<dbReference type="GO" id="GO:0004399">
    <property type="term" value="F:histidinol dehydrogenase activity"/>
    <property type="evidence" value="ECO:0007669"/>
    <property type="project" value="UniProtKB-UniRule"/>
</dbReference>
<dbReference type="GO" id="GO:0051287">
    <property type="term" value="F:NAD binding"/>
    <property type="evidence" value="ECO:0007669"/>
    <property type="project" value="InterPro"/>
</dbReference>
<dbReference type="GO" id="GO:0008270">
    <property type="term" value="F:zinc ion binding"/>
    <property type="evidence" value="ECO:0007669"/>
    <property type="project" value="UniProtKB-UniRule"/>
</dbReference>
<dbReference type="GO" id="GO:0000105">
    <property type="term" value="P:L-histidine biosynthetic process"/>
    <property type="evidence" value="ECO:0007669"/>
    <property type="project" value="UniProtKB-UniRule"/>
</dbReference>
<dbReference type="CDD" id="cd06572">
    <property type="entry name" value="Histidinol_dh"/>
    <property type="match status" value="1"/>
</dbReference>
<dbReference type="FunFam" id="3.40.50.1980:FF:000001">
    <property type="entry name" value="Histidinol dehydrogenase"/>
    <property type="match status" value="1"/>
</dbReference>
<dbReference type="FunFam" id="3.40.50.1980:FF:000026">
    <property type="entry name" value="Histidinol dehydrogenase"/>
    <property type="match status" value="1"/>
</dbReference>
<dbReference type="Gene3D" id="1.20.5.1300">
    <property type="match status" value="1"/>
</dbReference>
<dbReference type="Gene3D" id="3.40.50.1980">
    <property type="entry name" value="Nitrogenase molybdenum iron protein domain"/>
    <property type="match status" value="2"/>
</dbReference>
<dbReference type="HAMAP" id="MF_01024">
    <property type="entry name" value="HisD"/>
    <property type="match status" value="1"/>
</dbReference>
<dbReference type="InterPro" id="IPR016161">
    <property type="entry name" value="Ald_DH/histidinol_DH"/>
</dbReference>
<dbReference type="InterPro" id="IPR001692">
    <property type="entry name" value="Histidinol_DH_CS"/>
</dbReference>
<dbReference type="InterPro" id="IPR022695">
    <property type="entry name" value="Histidinol_DH_monofunct"/>
</dbReference>
<dbReference type="InterPro" id="IPR012131">
    <property type="entry name" value="Hstdl_DH"/>
</dbReference>
<dbReference type="NCBIfam" id="TIGR00069">
    <property type="entry name" value="hisD"/>
    <property type="match status" value="1"/>
</dbReference>
<dbReference type="PANTHER" id="PTHR21256:SF2">
    <property type="entry name" value="HISTIDINE BIOSYNTHESIS TRIFUNCTIONAL PROTEIN"/>
    <property type="match status" value="1"/>
</dbReference>
<dbReference type="PANTHER" id="PTHR21256">
    <property type="entry name" value="HISTIDINOL DEHYDROGENASE HDH"/>
    <property type="match status" value="1"/>
</dbReference>
<dbReference type="Pfam" id="PF00815">
    <property type="entry name" value="Histidinol_dh"/>
    <property type="match status" value="1"/>
</dbReference>
<dbReference type="PIRSF" id="PIRSF000099">
    <property type="entry name" value="Histidinol_dh"/>
    <property type="match status" value="1"/>
</dbReference>
<dbReference type="PRINTS" id="PR00083">
    <property type="entry name" value="HOLDHDRGNASE"/>
</dbReference>
<dbReference type="SUPFAM" id="SSF53720">
    <property type="entry name" value="ALDH-like"/>
    <property type="match status" value="1"/>
</dbReference>
<dbReference type="PROSITE" id="PS00611">
    <property type="entry name" value="HISOL_DEHYDROGENASE"/>
    <property type="match status" value="1"/>
</dbReference>
<comment type="function">
    <text evidence="1">Catalyzes the sequential NAD-dependent oxidations of L-histidinol to L-histidinaldehyde and then to L-histidine.</text>
</comment>
<comment type="catalytic activity">
    <reaction evidence="1">
        <text>L-histidinol + 2 NAD(+) + H2O = L-histidine + 2 NADH + 3 H(+)</text>
        <dbReference type="Rhea" id="RHEA:20641"/>
        <dbReference type="ChEBI" id="CHEBI:15377"/>
        <dbReference type="ChEBI" id="CHEBI:15378"/>
        <dbReference type="ChEBI" id="CHEBI:57540"/>
        <dbReference type="ChEBI" id="CHEBI:57595"/>
        <dbReference type="ChEBI" id="CHEBI:57699"/>
        <dbReference type="ChEBI" id="CHEBI:57945"/>
        <dbReference type="EC" id="1.1.1.23"/>
    </reaction>
</comment>
<comment type="cofactor">
    <cofactor evidence="1">
        <name>Zn(2+)</name>
        <dbReference type="ChEBI" id="CHEBI:29105"/>
    </cofactor>
    <text evidence="1">Binds 1 zinc ion per subunit.</text>
</comment>
<comment type="pathway">
    <text evidence="1">Amino-acid biosynthesis; L-histidine biosynthesis; L-histidine from 5-phospho-alpha-D-ribose 1-diphosphate: step 9/9.</text>
</comment>
<comment type="similarity">
    <text evidence="1">Belongs to the histidinol dehydrogenase family.</text>
</comment>
<evidence type="ECO:0000255" key="1">
    <source>
        <dbReference type="HAMAP-Rule" id="MF_01024"/>
    </source>
</evidence>
<proteinExistence type="inferred from homology"/>
<accession>Q8TXG3</accession>
<feature type="chain" id="PRO_0000135895" description="Histidinol dehydrogenase">
    <location>
        <begin position="1"/>
        <end position="431"/>
    </location>
</feature>
<feature type="active site" description="Proton acceptor" evidence="1">
    <location>
        <position position="329"/>
    </location>
</feature>
<feature type="active site" description="Proton acceptor" evidence="1">
    <location>
        <position position="330"/>
    </location>
</feature>
<feature type="binding site" evidence="1">
    <location>
        <position position="127"/>
    </location>
    <ligand>
        <name>NAD(+)</name>
        <dbReference type="ChEBI" id="CHEBI:57540"/>
    </ligand>
</feature>
<feature type="binding site" evidence="1">
    <location>
        <position position="190"/>
    </location>
    <ligand>
        <name>NAD(+)</name>
        <dbReference type="ChEBI" id="CHEBI:57540"/>
    </ligand>
</feature>
<feature type="binding site" evidence="1">
    <location>
        <position position="213"/>
    </location>
    <ligand>
        <name>NAD(+)</name>
        <dbReference type="ChEBI" id="CHEBI:57540"/>
    </ligand>
</feature>
<feature type="binding site" evidence="1">
    <location>
        <position position="238"/>
    </location>
    <ligand>
        <name>substrate</name>
    </ligand>
</feature>
<feature type="binding site" evidence="1">
    <location>
        <position position="260"/>
    </location>
    <ligand>
        <name>substrate</name>
    </ligand>
</feature>
<feature type="binding site" evidence="1">
    <location>
        <position position="260"/>
    </location>
    <ligand>
        <name>Zn(2+)</name>
        <dbReference type="ChEBI" id="CHEBI:29105"/>
    </ligand>
</feature>
<feature type="binding site" evidence="1">
    <location>
        <position position="263"/>
    </location>
    <ligand>
        <name>substrate</name>
    </ligand>
</feature>
<feature type="binding site" evidence="1">
    <location>
        <position position="263"/>
    </location>
    <ligand>
        <name>Zn(2+)</name>
        <dbReference type="ChEBI" id="CHEBI:29105"/>
    </ligand>
</feature>
<feature type="binding site" evidence="1">
    <location>
        <position position="330"/>
    </location>
    <ligand>
        <name>substrate</name>
    </ligand>
</feature>
<feature type="binding site" evidence="1">
    <location>
        <position position="363"/>
    </location>
    <ligand>
        <name>substrate</name>
    </ligand>
</feature>
<feature type="binding site" evidence="1">
    <location>
        <position position="363"/>
    </location>
    <ligand>
        <name>Zn(2+)</name>
        <dbReference type="ChEBI" id="CHEBI:29105"/>
    </ligand>
</feature>
<feature type="binding site" evidence="1">
    <location>
        <position position="417"/>
    </location>
    <ligand>
        <name>substrate</name>
    </ligand>
</feature>
<feature type="binding site" evidence="1">
    <location>
        <position position="422"/>
    </location>
    <ligand>
        <name>substrate</name>
    </ligand>
</feature>
<feature type="binding site" evidence="1">
    <location>
        <position position="422"/>
    </location>
    <ligand>
        <name>Zn(2+)</name>
        <dbReference type="ChEBI" id="CHEBI:29105"/>
    </ligand>
</feature>
<organism>
    <name type="scientific">Methanopyrus kandleri (strain AV19 / DSM 6324 / JCM 9639 / NBRC 100938)</name>
    <dbReference type="NCBI Taxonomy" id="190192"/>
    <lineage>
        <taxon>Archaea</taxon>
        <taxon>Methanobacteriati</taxon>
        <taxon>Methanobacteriota</taxon>
        <taxon>Methanomada group</taxon>
        <taxon>Methanopyri</taxon>
        <taxon>Methanopyrales</taxon>
        <taxon>Methanopyraceae</taxon>
        <taxon>Methanopyrus</taxon>
    </lineage>
</organism>
<name>HISX_METKA</name>
<sequence>MRLLVRPEEEELERVLRRSEMDVTEVLPDVERIFEDVVERGDEALLEYTERFDGVKLEAEDLRVSEDDFEVARELVDERTVEALEEAAHRIEEFHRKTLPRVDRITFDVEGTECGLTLRPIPRVGCYVPGGRAAYPSTALMTVIPARVAGCREVVVCTPPADNDVRASPEVLVAVEIAGADAVYRVGGAQAIAALAAGTETVLRVDKIVGPGNVYVTAAKLLAYSRGLTDVDMPAGPSEVFVIADDSANPDWLARDLIAQAEHDPHAAAVLATDSEEIARAVKERVEELLDAGIEREEIVLKALDRNGWIVVLDSLEECVRLANRYAPEHLQLCVENPEELLQDVENAGAVFVGHLTAVPFGDYATGPNHVLPTGGFARARGALGTWDFVKIIPIQRLREGDVERLAPIVEELAEREGLPNHAEAVRARRS</sequence>
<reference key="1">
    <citation type="journal article" date="2002" name="Proc. Natl. Acad. Sci. U.S.A.">
        <title>The complete genome of hyperthermophile Methanopyrus kandleri AV19 and monophyly of archaeal methanogens.</title>
        <authorList>
            <person name="Slesarev A.I."/>
            <person name="Mezhevaya K.V."/>
            <person name="Makarova K.S."/>
            <person name="Polushin N.N."/>
            <person name="Shcherbinina O.V."/>
            <person name="Shakhova V.V."/>
            <person name="Belova G.I."/>
            <person name="Aravind L."/>
            <person name="Natale D.A."/>
            <person name="Rogozin I.B."/>
            <person name="Tatusov R.L."/>
            <person name="Wolf Y.I."/>
            <person name="Stetter K.O."/>
            <person name="Malykh A.G."/>
            <person name="Koonin E.V."/>
            <person name="Kozyavkin S.A."/>
        </authorList>
    </citation>
    <scope>NUCLEOTIDE SEQUENCE [LARGE SCALE GENOMIC DNA]</scope>
    <source>
        <strain>AV19 / DSM 6324 / JCM 9639 / NBRC 100938</strain>
    </source>
</reference>
<keyword id="KW-0028">Amino-acid biosynthesis</keyword>
<keyword id="KW-0368">Histidine biosynthesis</keyword>
<keyword id="KW-0479">Metal-binding</keyword>
<keyword id="KW-0520">NAD</keyword>
<keyword id="KW-0560">Oxidoreductase</keyword>
<keyword id="KW-1185">Reference proteome</keyword>
<keyword id="KW-0862">Zinc</keyword>
<protein>
    <recommendedName>
        <fullName evidence="1">Histidinol dehydrogenase</fullName>
        <shortName evidence="1">HDH</shortName>
        <ecNumber evidence="1">1.1.1.23</ecNumber>
    </recommendedName>
</protein>
<gene>
    <name evidence="1" type="primary">hisD</name>
    <name type="ordered locus">MK0711</name>
</gene>